<proteinExistence type="inferred from homology"/>
<gene>
    <name evidence="1" type="primary">rpoZ</name>
    <name type="ordered locus">Pnap_0810</name>
</gene>
<organism>
    <name type="scientific">Polaromonas naphthalenivorans (strain CJ2)</name>
    <dbReference type="NCBI Taxonomy" id="365044"/>
    <lineage>
        <taxon>Bacteria</taxon>
        <taxon>Pseudomonadati</taxon>
        <taxon>Pseudomonadota</taxon>
        <taxon>Betaproteobacteria</taxon>
        <taxon>Burkholderiales</taxon>
        <taxon>Comamonadaceae</taxon>
        <taxon>Polaromonas</taxon>
    </lineage>
</organism>
<dbReference type="EC" id="2.7.7.6" evidence="1"/>
<dbReference type="EMBL" id="CP000529">
    <property type="protein sequence ID" value="ABM36129.1"/>
    <property type="molecule type" value="Genomic_DNA"/>
</dbReference>
<dbReference type="RefSeq" id="WP_011800224.1">
    <property type="nucleotide sequence ID" value="NC_008781.1"/>
</dbReference>
<dbReference type="SMR" id="A1VKF1"/>
<dbReference type="STRING" id="365044.Pnap_0810"/>
<dbReference type="KEGG" id="pna:Pnap_0810"/>
<dbReference type="eggNOG" id="COG1758">
    <property type="taxonomic scope" value="Bacteria"/>
</dbReference>
<dbReference type="HOGENOM" id="CLU_125406_5_1_4"/>
<dbReference type="OrthoDB" id="9796300at2"/>
<dbReference type="Proteomes" id="UP000000644">
    <property type="component" value="Chromosome"/>
</dbReference>
<dbReference type="GO" id="GO:0000428">
    <property type="term" value="C:DNA-directed RNA polymerase complex"/>
    <property type="evidence" value="ECO:0007669"/>
    <property type="project" value="UniProtKB-KW"/>
</dbReference>
<dbReference type="GO" id="GO:0003677">
    <property type="term" value="F:DNA binding"/>
    <property type="evidence" value="ECO:0007669"/>
    <property type="project" value="UniProtKB-UniRule"/>
</dbReference>
<dbReference type="GO" id="GO:0003899">
    <property type="term" value="F:DNA-directed RNA polymerase activity"/>
    <property type="evidence" value="ECO:0007669"/>
    <property type="project" value="UniProtKB-UniRule"/>
</dbReference>
<dbReference type="GO" id="GO:0006351">
    <property type="term" value="P:DNA-templated transcription"/>
    <property type="evidence" value="ECO:0007669"/>
    <property type="project" value="UniProtKB-UniRule"/>
</dbReference>
<dbReference type="Gene3D" id="3.90.940.10">
    <property type="match status" value="1"/>
</dbReference>
<dbReference type="HAMAP" id="MF_00366">
    <property type="entry name" value="RNApol_bact_RpoZ"/>
    <property type="match status" value="1"/>
</dbReference>
<dbReference type="InterPro" id="IPR003716">
    <property type="entry name" value="DNA-dir_RNA_pol_omega"/>
</dbReference>
<dbReference type="InterPro" id="IPR006110">
    <property type="entry name" value="Pol_omega/Rpo6/RPB6"/>
</dbReference>
<dbReference type="InterPro" id="IPR036161">
    <property type="entry name" value="RPB6/omega-like_sf"/>
</dbReference>
<dbReference type="NCBIfam" id="TIGR00690">
    <property type="entry name" value="rpoZ"/>
    <property type="match status" value="1"/>
</dbReference>
<dbReference type="PANTHER" id="PTHR34476">
    <property type="entry name" value="DNA-DIRECTED RNA POLYMERASE SUBUNIT OMEGA"/>
    <property type="match status" value="1"/>
</dbReference>
<dbReference type="PANTHER" id="PTHR34476:SF1">
    <property type="entry name" value="DNA-DIRECTED RNA POLYMERASE SUBUNIT OMEGA"/>
    <property type="match status" value="1"/>
</dbReference>
<dbReference type="Pfam" id="PF01192">
    <property type="entry name" value="RNA_pol_Rpb6"/>
    <property type="match status" value="1"/>
</dbReference>
<dbReference type="SMART" id="SM01409">
    <property type="entry name" value="RNA_pol_Rpb6"/>
    <property type="match status" value="1"/>
</dbReference>
<dbReference type="SUPFAM" id="SSF63562">
    <property type="entry name" value="RPB6/omega subunit-like"/>
    <property type="match status" value="1"/>
</dbReference>
<comment type="function">
    <text evidence="1">Promotes RNA polymerase assembly. Latches the N- and C-terminal regions of the beta' subunit thereby facilitating its interaction with the beta and alpha subunits.</text>
</comment>
<comment type="catalytic activity">
    <reaction evidence="1">
        <text>RNA(n) + a ribonucleoside 5'-triphosphate = RNA(n+1) + diphosphate</text>
        <dbReference type="Rhea" id="RHEA:21248"/>
        <dbReference type="Rhea" id="RHEA-COMP:14527"/>
        <dbReference type="Rhea" id="RHEA-COMP:17342"/>
        <dbReference type="ChEBI" id="CHEBI:33019"/>
        <dbReference type="ChEBI" id="CHEBI:61557"/>
        <dbReference type="ChEBI" id="CHEBI:140395"/>
        <dbReference type="EC" id="2.7.7.6"/>
    </reaction>
</comment>
<comment type="subunit">
    <text evidence="1">The RNAP catalytic core consists of 2 alpha, 1 beta, 1 beta' and 1 omega subunit. When a sigma factor is associated with the core the holoenzyme is formed, which can initiate transcription.</text>
</comment>
<comment type="similarity">
    <text evidence="1">Belongs to the RNA polymerase subunit omega family.</text>
</comment>
<name>RPOZ_POLNA</name>
<keyword id="KW-0240">DNA-directed RNA polymerase</keyword>
<keyword id="KW-0548">Nucleotidyltransferase</keyword>
<keyword id="KW-1185">Reference proteome</keyword>
<keyword id="KW-0804">Transcription</keyword>
<keyword id="KW-0808">Transferase</keyword>
<protein>
    <recommendedName>
        <fullName evidence="1">DNA-directed RNA polymerase subunit omega</fullName>
        <shortName evidence="1">RNAP omega subunit</shortName>
        <ecNumber evidence="1">2.7.7.6</ecNumber>
    </recommendedName>
    <alternativeName>
        <fullName evidence="1">RNA polymerase omega subunit</fullName>
    </alternativeName>
    <alternativeName>
        <fullName evidence="1">Transcriptase subunit omega</fullName>
    </alternativeName>
</protein>
<accession>A1VKF1</accession>
<evidence type="ECO:0000255" key="1">
    <source>
        <dbReference type="HAMAP-Rule" id="MF_00366"/>
    </source>
</evidence>
<reference key="1">
    <citation type="journal article" date="2009" name="Environ. Microbiol.">
        <title>The genome of Polaromonas naphthalenivorans strain CJ2, isolated from coal tar-contaminated sediment, reveals physiological and metabolic versatility and evolution through extensive horizontal gene transfer.</title>
        <authorList>
            <person name="Yagi J.M."/>
            <person name="Sims D."/>
            <person name="Brettin T."/>
            <person name="Bruce D."/>
            <person name="Madsen E.L."/>
        </authorList>
    </citation>
    <scope>NUCLEOTIDE SEQUENCE [LARGE SCALE GENOMIC DNA]</scope>
    <source>
        <strain>CJ2</strain>
    </source>
</reference>
<sequence>MARITVEDCLEKIPNRFQLVLAATYRARMLSQGHAARIESKNKPAVTALREIAAGKVGLEMLKKVPN</sequence>
<feature type="chain" id="PRO_1000005972" description="DNA-directed RNA polymerase subunit omega">
    <location>
        <begin position="1"/>
        <end position="67"/>
    </location>
</feature>